<comment type="function">
    <text evidence="1">One of the components of the core complex of photosystem II (PSII). It binds chlorophyll and helps catalyze the primary light-induced photochemical processes of PSII. PSII is a light-driven water:plastoquinone oxidoreductase, using light energy to abstract electrons from H(2)O, generating O(2) and a proton gradient subsequently used for ATP formation.</text>
</comment>
<comment type="cofactor">
    <text evidence="1">Binds multiple chlorophylls. PSII binds additional chlorophylls, carotenoids and specific lipids.</text>
</comment>
<comment type="subunit">
    <text evidence="1">PSII is composed of 1 copy each of membrane proteins PsbA, PsbB, PsbC, PsbD, PsbE, PsbF, PsbH, PsbI, PsbJ, PsbK, PsbL, PsbM, PsbT, PsbX, PsbY, PsbZ, Psb30/Ycf12, at least 3 peripheral proteins of the oxygen-evolving complex and a large number of cofactors. It forms dimeric complexes.</text>
</comment>
<comment type="subcellular location">
    <subcellularLocation>
        <location evidence="1">Plastid</location>
        <location evidence="1">Chloroplast thylakoid membrane</location>
        <topology evidence="1">Multi-pass membrane protein</topology>
    </subcellularLocation>
</comment>
<comment type="similarity">
    <text evidence="1">Belongs to the PsbB/PsbC family. PsbB subfamily.</text>
</comment>
<sequence length="508" mass="56035">MGLPWYRVHTVVLNDPGRLLSVHIMHTALVAGWAGSMALYELAVFDPSDPVLDPMWRQGMFVIPFMTRLGITNSWGGWNITGGTITNPGIWSYEGVAGAHIVFSGLCFLAAIWHWVYWDLEIFCDERTGKPSLDLPKIFGIHLFLAGVACFGFGAFHVTGLYGPGIWVSDPYGLTGRIQSVNPAWGVEGFDPFVPGGVASHHIAAGTLGILAGLFHLSVRPPQRLYKGLRMGNIETVLSSSIAAVFFAAFVVAGTMWYGSATTPIELFGPTRYQWDQGYFQQEIYRRVGAGLAENQSLSEAWSKIPEKLAFYDYIGNNPAKGGLFRAGSMDNGDGIAVGWLGHPVFRDKEGHELFVRRMPTFFETFPVVLVDGDGIVRADVPFRRAESKYSVEQVGVIVEFYGGELNGVSYSDPATVKKYARRAQLGEIFELDRATLKSDGVFRSSPRGWFTFGHASFALLFFFGHIWHGARTLFRDVFAGIDPDLDAQVEFGAFQKLGDPTTKKQVV</sequence>
<feature type="chain" id="PRO_0000277452" description="Photosystem II CP47 reaction center protein">
    <location>
        <begin position="1"/>
        <end position="508"/>
    </location>
</feature>
<feature type="transmembrane region" description="Helical" evidence="1">
    <location>
        <begin position="21"/>
        <end position="36"/>
    </location>
</feature>
<feature type="transmembrane region" description="Helical" evidence="1">
    <location>
        <begin position="101"/>
        <end position="115"/>
    </location>
</feature>
<feature type="transmembrane region" description="Helical" evidence="1">
    <location>
        <begin position="140"/>
        <end position="156"/>
    </location>
</feature>
<feature type="transmembrane region" description="Helical" evidence="1">
    <location>
        <begin position="203"/>
        <end position="218"/>
    </location>
</feature>
<feature type="transmembrane region" description="Helical" evidence="1">
    <location>
        <begin position="237"/>
        <end position="252"/>
    </location>
</feature>
<feature type="transmembrane region" description="Helical" evidence="1">
    <location>
        <begin position="457"/>
        <end position="472"/>
    </location>
</feature>
<reference key="1">
    <citation type="journal article" date="2005" name="Plant Mol. Biol.">
        <title>Complete chloroplast genome sequence of Glycine max and comparative analyses with other legume genomes.</title>
        <authorList>
            <person name="Saski C."/>
            <person name="Lee S.-B."/>
            <person name="Daniell H."/>
            <person name="Wood T.C."/>
            <person name="Tomkins J."/>
            <person name="Kim H.-G."/>
            <person name="Jansen R.K."/>
        </authorList>
    </citation>
    <scope>NUCLEOTIDE SEQUENCE [LARGE SCALE GENOMIC DNA]</scope>
    <source>
        <strain>cv. PI 437654</strain>
    </source>
</reference>
<name>PSBB_SOYBN</name>
<evidence type="ECO:0000255" key="1">
    <source>
        <dbReference type="HAMAP-Rule" id="MF_01495"/>
    </source>
</evidence>
<accession>Q2PMQ9</accession>
<gene>
    <name evidence="1" type="primary">psbB</name>
</gene>
<geneLocation type="chloroplast"/>
<dbReference type="EMBL" id="DQ317523">
    <property type="protein sequence ID" value="ABC25149.1"/>
    <property type="molecule type" value="Genomic_DNA"/>
</dbReference>
<dbReference type="RefSeq" id="YP_538791.1">
    <property type="nucleotide sequence ID" value="NC_007942.1"/>
</dbReference>
<dbReference type="SMR" id="Q2PMQ9"/>
<dbReference type="FunCoup" id="Q2PMQ9">
    <property type="interactions" value="650"/>
</dbReference>
<dbReference type="STRING" id="3847.Q2PMQ9"/>
<dbReference type="PaxDb" id="3847-GLYMA08G38510.1"/>
<dbReference type="GeneID" id="3989323"/>
<dbReference type="KEGG" id="gmx:3989323"/>
<dbReference type="eggNOG" id="ENOG502SNBZ">
    <property type="taxonomic scope" value="Eukaryota"/>
</dbReference>
<dbReference type="InParanoid" id="Q2PMQ9"/>
<dbReference type="Proteomes" id="UP000008827">
    <property type="component" value="Chloroplast"/>
</dbReference>
<dbReference type="GO" id="GO:0009535">
    <property type="term" value="C:chloroplast thylakoid membrane"/>
    <property type="evidence" value="ECO:0007669"/>
    <property type="project" value="UniProtKB-SubCell"/>
</dbReference>
<dbReference type="GO" id="GO:0009523">
    <property type="term" value="C:photosystem II"/>
    <property type="evidence" value="ECO:0007669"/>
    <property type="project" value="UniProtKB-KW"/>
</dbReference>
<dbReference type="GO" id="GO:0016168">
    <property type="term" value="F:chlorophyll binding"/>
    <property type="evidence" value="ECO:0007669"/>
    <property type="project" value="UniProtKB-UniRule"/>
</dbReference>
<dbReference type="GO" id="GO:0045156">
    <property type="term" value="F:electron transporter, transferring electrons within the cyclic electron transport pathway of photosynthesis activity"/>
    <property type="evidence" value="ECO:0007669"/>
    <property type="project" value="InterPro"/>
</dbReference>
<dbReference type="GO" id="GO:0009772">
    <property type="term" value="P:photosynthetic electron transport in photosystem II"/>
    <property type="evidence" value="ECO:0007669"/>
    <property type="project" value="InterPro"/>
</dbReference>
<dbReference type="FunFam" id="3.10.680.10:FF:000001">
    <property type="entry name" value="Photosystem II CP47 reaction center protein"/>
    <property type="match status" value="1"/>
</dbReference>
<dbReference type="Gene3D" id="3.10.680.10">
    <property type="entry name" value="Photosystem II CP47 reaction center protein"/>
    <property type="match status" value="1"/>
</dbReference>
<dbReference type="HAMAP" id="MF_01495">
    <property type="entry name" value="PSII_PsbB_CP47"/>
    <property type="match status" value="1"/>
</dbReference>
<dbReference type="InterPro" id="IPR000932">
    <property type="entry name" value="PS_antenna-like"/>
</dbReference>
<dbReference type="InterPro" id="IPR036001">
    <property type="entry name" value="PS_II_antenna-like_sf"/>
</dbReference>
<dbReference type="InterPro" id="IPR017486">
    <property type="entry name" value="PSII_PsbB"/>
</dbReference>
<dbReference type="NCBIfam" id="TIGR03039">
    <property type="entry name" value="PS_II_CP47"/>
    <property type="match status" value="1"/>
</dbReference>
<dbReference type="PANTHER" id="PTHR33180">
    <property type="entry name" value="PHOTOSYSTEM II CP43 REACTION CENTER PROTEIN"/>
    <property type="match status" value="1"/>
</dbReference>
<dbReference type="PANTHER" id="PTHR33180:SF38">
    <property type="entry name" value="PHOTOSYSTEM II CP47 REACTION CENTER PROTEIN"/>
    <property type="match status" value="1"/>
</dbReference>
<dbReference type="Pfam" id="PF00421">
    <property type="entry name" value="PSII"/>
    <property type="match status" value="1"/>
</dbReference>
<dbReference type="SUPFAM" id="SSF161077">
    <property type="entry name" value="Photosystem II antenna protein-like"/>
    <property type="match status" value="1"/>
</dbReference>
<organism>
    <name type="scientific">Glycine max</name>
    <name type="common">Soybean</name>
    <name type="synonym">Glycine hispida</name>
    <dbReference type="NCBI Taxonomy" id="3847"/>
    <lineage>
        <taxon>Eukaryota</taxon>
        <taxon>Viridiplantae</taxon>
        <taxon>Streptophyta</taxon>
        <taxon>Embryophyta</taxon>
        <taxon>Tracheophyta</taxon>
        <taxon>Spermatophyta</taxon>
        <taxon>Magnoliopsida</taxon>
        <taxon>eudicotyledons</taxon>
        <taxon>Gunneridae</taxon>
        <taxon>Pentapetalae</taxon>
        <taxon>rosids</taxon>
        <taxon>fabids</taxon>
        <taxon>Fabales</taxon>
        <taxon>Fabaceae</taxon>
        <taxon>Papilionoideae</taxon>
        <taxon>50 kb inversion clade</taxon>
        <taxon>NPAAA clade</taxon>
        <taxon>indigoferoid/millettioid clade</taxon>
        <taxon>Phaseoleae</taxon>
        <taxon>Glycine</taxon>
        <taxon>Glycine subgen. Soja</taxon>
    </lineage>
</organism>
<proteinExistence type="inferred from homology"/>
<keyword id="KW-0148">Chlorophyll</keyword>
<keyword id="KW-0150">Chloroplast</keyword>
<keyword id="KW-0157">Chromophore</keyword>
<keyword id="KW-0472">Membrane</keyword>
<keyword id="KW-0602">Photosynthesis</keyword>
<keyword id="KW-0604">Photosystem II</keyword>
<keyword id="KW-0934">Plastid</keyword>
<keyword id="KW-1185">Reference proteome</keyword>
<keyword id="KW-0793">Thylakoid</keyword>
<keyword id="KW-0812">Transmembrane</keyword>
<keyword id="KW-1133">Transmembrane helix</keyword>
<protein>
    <recommendedName>
        <fullName evidence="1">Photosystem II CP47 reaction center protein</fullName>
    </recommendedName>
    <alternativeName>
        <fullName evidence="1">PSII 47 kDa protein</fullName>
    </alternativeName>
    <alternativeName>
        <fullName evidence="1">Protein CP-47</fullName>
    </alternativeName>
</protein>